<organism>
    <name type="scientific">Methylobacterium sp. (strain 4-46)</name>
    <dbReference type="NCBI Taxonomy" id="426117"/>
    <lineage>
        <taxon>Bacteria</taxon>
        <taxon>Pseudomonadati</taxon>
        <taxon>Pseudomonadota</taxon>
        <taxon>Alphaproteobacteria</taxon>
        <taxon>Hyphomicrobiales</taxon>
        <taxon>Methylobacteriaceae</taxon>
        <taxon>Methylobacterium</taxon>
    </lineage>
</organism>
<comment type="function">
    <text evidence="1">Located on the platform of the 30S subunit, it bridges several disparate RNA helices of the 16S rRNA. Forms part of the Shine-Dalgarno cleft in the 70S ribosome.</text>
</comment>
<comment type="subunit">
    <text evidence="1">Part of the 30S ribosomal subunit. Interacts with proteins S7 and S18. Binds to IF-3.</text>
</comment>
<comment type="similarity">
    <text evidence="1">Belongs to the universal ribosomal protein uS11 family.</text>
</comment>
<sequence>MAKEATRIRRRERKNIVSGVAHVNASFNNTMITITDAQGNTISWSSAGAMGFKGSRKSTPYAAQVAAEDAGRKAAEHGMRTLEVEVSGPGSGRESALRALQAAGFTVTSIRDVTPIPHNGCRPRKRRRV</sequence>
<name>RS11_METS4</name>
<dbReference type="EMBL" id="CP000943">
    <property type="protein sequence ID" value="ACA14901.1"/>
    <property type="molecule type" value="Genomic_DNA"/>
</dbReference>
<dbReference type="RefSeq" id="WP_012330319.1">
    <property type="nucleotide sequence ID" value="NC_010511.1"/>
</dbReference>
<dbReference type="SMR" id="B0UHU6"/>
<dbReference type="STRING" id="426117.M446_0330"/>
<dbReference type="KEGG" id="met:M446_0330"/>
<dbReference type="eggNOG" id="COG0100">
    <property type="taxonomic scope" value="Bacteria"/>
</dbReference>
<dbReference type="HOGENOM" id="CLU_072439_5_0_5"/>
<dbReference type="GO" id="GO:1990904">
    <property type="term" value="C:ribonucleoprotein complex"/>
    <property type="evidence" value="ECO:0007669"/>
    <property type="project" value="UniProtKB-KW"/>
</dbReference>
<dbReference type="GO" id="GO:0005840">
    <property type="term" value="C:ribosome"/>
    <property type="evidence" value="ECO:0007669"/>
    <property type="project" value="UniProtKB-KW"/>
</dbReference>
<dbReference type="GO" id="GO:0019843">
    <property type="term" value="F:rRNA binding"/>
    <property type="evidence" value="ECO:0007669"/>
    <property type="project" value="UniProtKB-UniRule"/>
</dbReference>
<dbReference type="GO" id="GO:0003735">
    <property type="term" value="F:structural constituent of ribosome"/>
    <property type="evidence" value="ECO:0007669"/>
    <property type="project" value="InterPro"/>
</dbReference>
<dbReference type="GO" id="GO:0006412">
    <property type="term" value="P:translation"/>
    <property type="evidence" value="ECO:0007669"/>
    <property type="project" value="UniProtKB-UniRule"/>
</dbReference>
<dbReference type="FunFam" id="3.30.420.80:FF:000001">
    <property type="entry name" value="30S ribosomal protein S11"/>
    <property type="match status" value="1"/>
</dbReference>
<dbReference type="Gene3D" id="3.30.420.80">
    <property type="entry name" value="Ribosomal protein S11"/>
    <property type="match status" value="1"/>
</dbReference>
<dbReference type="HAMAP" id="MF_01310">
    <property type="entry name" value="Ribosomal_uS11"/>
    <property type="match status" value="1"/>
</dbReference>
<dbReference type="InterPro" id="IPR001971">
    <property type="entry name" value="Ribosomal_uS11"/>
</dbReference>
<dbReference type="InterPro" id="IPR019981">
    <property type="entry name" value="Ribosomal_uS11_bac-type"/>
</dbReference>
<dbReference type="InterPro" id="IPR018102">
    <property type="entry name" value="Ribosomal_uS11_CS"/>
</dbReference>
<dbReference type="InterPro" id="IPR036967">
    <property type="entry name" value="Ribosomal_uS11_sf"/>
</dbReference>
<dbReference type="NCBIfam" id="NF003698">
    <property type="entry name" value="PRK05309.1"/>
    <property type="match status" value="1"/>
</dbReference>
<dbReference type="NCBIfam" id="TIGR03632">
    <property type="entry name" value="uS11_bact"/>
    <property type="match status" value="1"/>
</dbReference>
<dbReference type="PANTHER" id="PTHR11759">
    <property type="entry name" value="40S RIBOSOMAL PROTEIN S14/30S RIBOSOMAL PROTEIN S11"/>
    <property type="match status" value="1"/>
</dbReference>
<dbReference type="Pfam" id="PF00411">
    <property type="entry name" value="Ribosomal_S11"/>
    <property type="match status" value="1"/>
</dbReference>
<dbReference type="PIRSF" id="PIRSF002131">
    <property type="entry name" value="Ribosomal_S11"/>
    <property type="match status" value="1"/>
</dbReference>
<dbReference type="SUPFAM" id="SSF53137">
    <property type="entry name" value="Translational machinery components"/>
    <property type="match status" value="1"/>
</dbReference>
<dbReference type="PROSITE" id="PS00054">
    <property type="entry name" value="RIBOSOMAL_S11"/>
    <property type="match status" value="1"/>
</dbReference>
<accession>B0UHU6</accession>
<reference key="1">
    <citation type="submission" date="2008-02" db="EMBL/GenBank/DDBJ databases">
        <title>Complete sequence of chromosome of Methylobacterium sp. 4-46.</title>
        <authorList>
            <consortium name="US DOE Joint Genome Institute"/>
            <person name="Copeland A."/>
            <person name="Lucas S."/>
            <person name="Lapidus A."/>
            <person name="Glavina del Rio T."/>
            <person name="Dalin E."/>
            <person name="Tice H."/>
            <person name="Bruce D."/>
            <person name="Goodwin L."/>
            <person name="Pitluck S."/>
            <person name="Chertkov O."/>
            <person name="Brettin T."/>
            <person name="Detter J.C."/>
            <person name="Han C."/>
            <person name="Kuske C.R."/>
            <person name="Schmutz J."/>
            <person name="Larimer F."/>
            <person name="Land M."/>
            <person name="Hauser L."/>
            <person name="Kyrpides N."/>
            <person name="Ivanova N."/>
            <person name="Marx C.J."/>
            <person name="Richardson P."/>
        </authorList>
    </citation>
    <scope>NUCLEOTIDE SEQUENCE [LARGE SCALE GENOMIC DNA]</scope>
    <source>
        <strain>4-46</strain>
    </source>
</reference>
<feature type="chain" id="PRO_1000141111" description="Small ribosomal subunit protein uS11">
    <location>
        <begin position="1"/>
        <end position="129"/>
    </location>
</feature>
<protein>
    <recommendedName>
        <fullName evidence="1">Small ribosomal subunit protein uS11</fullName>
    </recommendedName>
    <alternativeName>
        <fullName evidence="2">30S ribosomal protein S11</fullName>
    </alternativeName>
</protein>
<keyword id="KW-0687">Ribonucleoprotein</keyword>
<keyword id="KW-0689">Ribosomal protein</keyword>
<keyword id="KW-0694">RNA-binding</keyword>
<keyword id="KW-0699">rRNA-binding</keyword>
<evidence type="ECO:0000255" key="1">
    <source>
        <dbReference type="HAMAP-Rule" id="MF_01310"/>
    </source>
</evidence>
<evidence type="ECO:0000305" key="2"/>
<gene>
    <name evidence="1" type="primary">rpsK</name>
    <name type="ordered locus">M446_0330</name>
</gene>
<proteinExistence type="inferred from homology"/>